<name>TRMB_RHOPS</name>
<dbReference type="EC" id="2.1.1.33" evidence="2"/>
<dbReference type="EMBL" id="CP000283">
    <property type="protein sequence ID" value="ABE37476.1"/>
    <property type="molecule type" value="Genomic_DNA"/>
</dbReference>
<dbReference type="SMR" id="Q13EL3"/>
<dbReference type="STRING" id="316057.RPD_0236"/>
<dbReference type="KEGG" id="rpd:RPD_0236"/>
<dbReference type="eggNOG" id="COG0220">
    <property type="taxonomic scope" value="Bacteria"/>
</dbReference>
<dbReference type="HOGENOM" id="CLU_050910_0_3_5"/>
<dbReference type="BioCyc" id="RPAL316057:RPD_RS01195-MONOMER"/>
<dbReference type="UniPathway" id="UPA00989"/>
<dbReference type="Proteomes" id="UP000001818">
    <property type="component" value="Chromosome"/>
</dbReference>
<dbReference type="GO" id="GO:0043527">
    <property type="term" value="C:tRNA methyltransferase complex"/>
    <property type="evidence" value="ECO:0007669"/>
    <property type="project" value="TreeGrafter"/>
</dbReference>
<dbReference type="GO" id="GO:0008176">
    <property type="term" value="F:tRNA (guanine(46)-N7)-methyltransferase activity"/>
    <property type="evidence" value="ECO:0007669"/>
    <property type="project" value="UniProtKB-UniRule"/>
</dbReference>
<dbReference type="Gene3D" id="3.40.50.150">
    <property type="entry name" value="Vaccinia Virus protein VP39"/>
    <property type="match status" value="1"/>
</dbReference>
<dbReference type="HAMAP" id="MF_01057">
    <property type="entry name" value="tRNA_methyltr_TrmB"/>
    <property type="match status" value="1"/>
</dbReference>
<dbReference type="InterPro" id="IPR029063">
    <property type="entry name" value="SAM-dependent_MTases_sf"/>
</dbReference>
<dbReference type="InterPro" id="IPR003358">
    <property type="entry name" value="tRNA_(Gua-N-7)_MeTrfase_Trmb"/>
</dbReference>
<dbReference type="InterPro" id="IPR055361">
    <property type="entry name" value="tRNA_methyltr_TrmB_bact"/>
</dbReference>
<dbReference type="NCBIfam" id="TIGR00091">
    <property type="entry name" value="tRNA (guanosine(46)-N7)-methyltransferase TrmB"/>
    <property type="match status" value="1"/>
</dbReference>
<dbReference type="PANTHER" id="PTHR23417">
    <property type="entry name" value="3-DEOXY-D-MANNO-OCTULOSONIC-ACID TRANSFERASE/TRNA GUANINE-N 7 - -METHYLTRANSFERASE"/>
    <property type="match status" value="1"/>
</dbReference>
<dbReference type="PANTHER" id="PTHR23417:SF14">
    <property type="entry name" value="PENTACOTRIPEPTIDE-REPEAT REGION OF PRORP DOMAIN-CONTAINING PROTEIN"/>
    <property type="match status" value="1"/>
</dbReference>
<dbReference type="Pfam" id="PF02390">
    <property type="entry name" value="Methyltransf_4"/>
    <property type="match status" value="1"/>
</dbReference>
<dbReference type="SUPFAM" id="SSF53335">
    <property type="entry name" value="S-adenosyl-L-methionine-dependent methyltransferases"/>
    <property type="match status" value="1"/>
</dbReference>
<dbReference type="PROSITE" id="PS51625">
    <property type="entry name" value="SAM_MT_TRMB"/>
    <property type="match status" value="1"/>
</dbReference>
<gene>
    <name evidence="2" type="primary">trmB</name>
    <name type="ordered locus">RPD_0236</name>
</gene>
<reference key="1">
    <citation type="submission" date="2006-03" db="EMBL/GenBank/DDBJ databases">
        <title>Complete sequence of Rhodopseudomonas palustris BisB5.</title>
        <authorList>
            <consortium name="US DOE Joint Genome Institute"/>
            <person name="Copeland A."/>
            <person name="Lucas S."/>
            <person name="Lapidus A."/>
            <person name="Barry K."/>
            <person name="Detter J.C."/>
            <person name="Glavina del Rio T."/>
            <person name="Hammon N."/>
            <person name="Israni S."/>
            <person name="Dalin E."/>
            <person name="Tice H."/>
            <person name="Pitluck S."/>
            <person name="Chain P."/>
            <person name="Malfatti S."/>
            <person name="Shin M."/>
            <person name="Vergez L."/>
            <person name="Schmutz J."/>
            <person name="Larimer F."/>
            <person name="Land M."/>
            <person name="Hauser L."/>
            <person name="Pelletier D.A."/>
            <person name="Kyrpides N."/>
            <person name="Lykidis A."/>
            <person name="Oda Y."/>
            <person name="Harwood C.S."/>
            <person name="Richardson P."/>
        </authorList>
    </citation>
    <scope>NUCLEOTIDE SEQUENCE [LARGE SCALE GENOMIC DNA]</scope>
    <source>
        <strain>BisB5</strain>
    </source>
</reference>
<proteinExistence type="inferred from homology"/>
<feature type="chain" id="PRO_0000288215" description="tRNA (guanine-N(7)-)-methyltransferase">
    <location>
        <begin position="1"/>
        <end position="256"/>
    </location>
</feature>
<feature type="active site" evidence="1">
    <location>
        <position position="159"/>
    </location>
</feature>
<feature type="binding site" evidence="2">
    <location>
        <position position="85"/>
    </location>
    <ligand>
        <name>S-adenosyl-L-methionine</name>
        <dbReference type="ChEBI" id="CHEBI:59789"/>
    </ligand>
</feature>
<feature type="binding site" evidence="2">
    <location>
        <position position="110"/>
    </location>
    <ligand>
        <name>S-adenosyl-L-methionine</name>
        <dbReference type="ChEBI" id="CHEBI:59789"/>
    </ligand>
</feature>
<feature type="binding site" evidence="2">
    <location>
        <position position="137"/>
    </location>
    <ligand>
        <name>S-adenosyl-L-methionine</name>
        <dbReference type="ChEBI" id="CHEBI:59789"/>
    </ligand>
</feature>
<feature type="binding site" evidence="2">
    <location>
        <position position="159"/>
    </location>
    <ligand>
        <name>S-adenosyl-L-methionine</name>
        <dbReference type="ChEBI" id="CHEBI:59789"/>
    </ligand>
</feature>
<feature type="binding site" evidence="2">
    <location>
        <position position="163"/>
    </location>
    <ligand>
        <name>substrate</name>
    </ligand>
</feature>
<feature type="binding site" evidence="2">
    <location>
        <position position="195"/>
    </location>
    <ligand>
        <name>substrate</name>
    </ligand>
</feature>
<keyword id="KW-0489">Methyltransferase</keyword>
<keyword id="KW-0949">S-adenosyl-L-methionine</keyword>
<keyword id="KW-0808">Transferase</keyword>
<keyword id="KW-0819">tRNA processing</keyword>
<comment type="function">
    <text evidence="2">Catalyzes the formation of N(7)-methylguanine at position 46 (m7G46) in tRNA.</text>
</comment>
<comment type="catalytic activity">
    <reaction evidence="2">
        <text>guanosine(46) in tRNA + S-adenosyl-L-methionine = N(7)-methylguanosine(46) in tRNA + S-adenosyl-L-homocysteine</text>
        <dbReference type="Rhea" id="RHEA:42708"/>
        <dbReference type="Rhea" id="RHEA-COMP:10188"/>
        <dbReference type="Rhea" id="RHEA-COMP:10189"/>
        <dbReference type="ChEBI" id="CHEBI:57856"/>
        <dbReference type="ChEBI" id="CHEBI:59789"/>
        <dbReference type="ChEBI" id="CHEBI:74269"/>
        <dbReference type="ChEBI" id="CHEBI:74480"/>
        <dbReference type="EC" id="2.1.1.33"/>
    </reaction>
</comment>
<comment type="pathway">
    <text evidence="2">tRNA modification; N(7)-methylguanine-tRNA biosynthesis.</text>
</comment>
<comment type="similarity">
    <text evidence="2">Belongs to the class I-like SAM-binding methyltransferase superfamily. TrmB family.</text>
</comment>
<protein>
    <recommendedName>
        <fullName evidence="2">tRNA (guanine-N(7)-)-methyltransferase</fullName>
        <ecNumber evidence="2">2.1.1.33</ecNumber>
    </recommendedName>
    <alternativeName>
        <fullName evidence="2">tRNA (guanine(46)-N(7))-methyltransferase</fullName>
    </alternativeName>
    <alternativeName>
        <fullName evidence="2">tRNA(m7G46)-methyltransferase</fullName>
    </alternativeName>
</protein>
<evidence type="ECO:0000250" key="1"/>
<evidence type="ECO:0000255" key="2">
    <source>
        <dbReference type="HAMAP-Rule" id="MF_01057"/>
    </source>
</evidence>
<organism>
    <name type="scientific">Rhodopseudomonas palustris (strain BisB5)</name>
    <dbReference type="NCBI Taxonomy" id="316057"/>
    <lineage>
        <taxon>Bacteria</taxon>
        <taxon>Pseudomonadati</taxon>
        <taxon>Pseudomonadota</taxon>
        <taxon>Alphaproteobacteria</taxon>
        <taxon>Hyphomicrobiales</taxon>
        <taxon>Nitrobacteraceae</taxon>
        <taxon>Rhodopseudomonas</taxon>
    </lineage>
</organism>
<sequence length="256" mass="29350">MITIDRRVQTKCSVLGRHKQVFIDMNETVHHQGSFFGRRKGHKLRAHQADLVDNLLPHLALDIELPAPDALAELFDAPVEAVRLEIGFGGGEHLIAEALAHPEIGFIGAEPYVNGMAKILARIEDQNIRNVRLFAGDAAELMAWLPARALKRIDLIHPDPWPKRRHWKRRFVQDSMIGAMARALIDGGEFRFVSDIDSYNAWTLAHLLRAPEFDWTAERADDWRKPWSGYTMTRYGRKAEREGRRASYLRFRRIAA</sequence>
<accession>Q13EL3</accession>